<protein>
    <recommendedName>
        <fullName evidence="1">ATP synthase subunit b</fullName>
    </recommendedName>
    <alternativeName>
        <fullName evidence="1">ATP synthase F(0) sector subunit b</fullName>
    </alternativeName>
    <alternativeName>
        <fullName evidence="1">ATPase subunit I</fullName>
    </alternativeName>
    <alternativeName>
        <fullName evidence="1">F-type ATPase subunit b</fullName>
        <shortName evidence="1">F-ATPase subunit b</shortName>
    </alternativeName>
</protein>
<gene>
    <name evidence="1" type="primary">atpF</name>
    <name type="ordered locus">AAur_2598</name>
</gene>
<dbReference type="EMBL" id="CP000474">
    <property type="protein sequence ID" value="ABM09584.1"/>
    <property type="molecule type" value="Genomic_DNA"/>
</dbReference>
<dbReference type="RefSeq" id="WP_011775260.1">
    <property type="nucleotide sequence ID" value="NC_008711.1"/>
</dbReference>
<dbReference type="SMR" id="A1R7V6"/>
<dbReference type="STRING" id="290340.AAur_2598"/>
<dbReference type="KEGG" id="aau:AAur_2598"/>
<dbReference type="eggNOG" id="COG0711">
    <property type="taxonomic scope" value="Bacteria"/>
</dbReference>
<dbReference type="HOGENOM" id="CLU_079215_5_1_11"/>
<dbReference type="OrthoDB" id="5243563at2"/>
<dbReference type="Proteomes" id="UP000000637">
    <property type="component" value="Chromosome"/>
</dbReference>
<dbReference type="GO" id="GO:0005886">
    <property type="term" value="C:plasma membrane"/>
    <property type="evidence" value="ECO:0007669"/>
    <property type="project" value="UniProtKB-SubCell"/>
</dbReference>
<dbReference type="GO" id="GO:0045259">
    <property type="term" value="C:proton-transporting ATP synthase complex"/>
    <property type="evidence" value="ECO:0007669"/>
    <property type="project" value="UniProtKB-KW"/>
</dbReference>
<dbReference type="GO" id="GO:0046933">
    <property type="term" value="F:proton-transporting ATP synthase activity, rotational mechanism"/>
    <property type="evidence" value="ECO:0007669"/>
    <property type="project" value="UniProtKB-UniRule"/>
</dbReference>
<dbReference type="GO" id="GO:0046961">
    <property type="term" value="F:proton-transporting ATPase activity, rotational mechanism"/>
    <property type="evidence" value="ECO:0007669"/>
    <property type="project" value="TreeGrafter"/>
</dbReference>
<dbReference type="CDD" id="cd06503">
    <property type="entry name" value="ATP-synt_Fo_b"/>
    <property type="match status" value="1"/>
</dbReference>
<dbReference type="Gene3D" id="1.20.5.620">
    <property type="entry name" value="F1F0 ATP synthase subunit B, membrane domain"/>
    <property type="match status" value="1"/>
</dbReference>
<dbReference type="HAMAP" id="MF_01398">
    <property type="entry name" value="ATP_synth_b_bprime"/>
    <property type="match status" value="1"/>
</dbReference>
<dbReference type="InterPro" id="IPR028987">
    <property type="entry name" value="ATP_synth_B-like_membr_sf"/>
</dbReference>
<dbReference type="InterPro" id="IPR002146">
    <property type="entry name" value="ATP_synth_b/b'su_bac/chlpt"/>
</dbReference>
<dbReference type="InterPro" id="IPR005864">
    <property type="entry name" value="ATP_synth_F0_bsu_bac"/>
</dbReference>
<dbReference type="InterPro" id="IPR050059">
    <property type="entry name" value="ATP_synthase_B_chain"/>
</dbReference>
<dbReference type="NCBIfam" id="TIGR01144">
    <property type="entry name" value="ATP_synt_b"/>
    <property type="match status" value="1"/>
</dbReference>
<dbReference type="NCBIfam" id="NF004412">
    <property type="entry name" value="PRK05759.1-3"/>
    <property type="match status" value="1"/>
</dbReference>
<dbReference type="PANTHER" id="PTHR33445:SF1">
    <property type="entry name" value="ATP SYNTHASE SUBUNIT B"/>
    <property type="match status" value="1"/>
</dbReference>
<dbReference type="PANTHER" id="PTHR33445">
    <property type="entry name" value="ATP SYNTHASE SUBUNIT B', CHLOROPLASTIC"/>
    <property type="match status" value="1"/>
</dbReference>
<dbReference type="Pfam" id="PF00430">
    <property type="entry name" value="ATP-synt_B"/>
    <property type="match status" value="1"/>
</dbReference>
<dbReference type="SUPFAM" id="SSF81573">
    <property type="entry name" value="F1F0 ATP synthase subunit B, membrane domain"/>
    <property type="match status" value="1"/>
</dbReference>
<keyword id="KW-0066">ATP synthesis</keyword>
<keyword id="KW-1003">Cell membrane</keyword>
<keyword id="KW-0138">CF(0)</keyword>
<keyword id="KW-0375">Hydrogen ion transport</keyword>
<keyword id="KW-0406">Ion transport</keyword>
<keyword id="KW-0472">Membrane</keyword>
<keyword id="KW-0812">Transmembrane</keyword>
<keyword id="KW-1133">Transmembrane helix</keyword>
<keyword id="KW-0813">Transport</keyword>
<sequence>MNQLIISAATEGAAEANPLVPNVWEMGVVLVGFAVLMYIVVKFVVPMFEKTFAERAEAIEGGIAKAEAAQAEASAALEEYKQQLTDARAEANRIREEARAEGAQILADLKAKAAAESARITEQAHAAIESERQAAVVSLRSEVGTLATTLAGRIVGEALTDDQRAARVVDRFLADLETQSAGAAK</sequence>
<name>ATPF_PAEAT</name>
<evidence type="ECO:0000255" key="1">
    <source>
        <dbReference type="HAMAP-Rule" id="MF_01398"/>
    </source>
</evidence>
<reference key="1">
    <citation type="journal article" date="2006" name="PLoS Genet.">
        <title>Secrets of soil survival revealed by the genome sequence of Arthrobacter aurescens TC1.</title>
        <authorList>
            <person name="Mongodin E.F."/>
            <person name="Shapir N."/>
            <person name="Daugherty S.C."/>
            <person name="DeBoy R.T."/>
            <person name="Emerson J.B."/>
            <person name="Shvartzbeyn A."/>
            <person name="Radune D."/>
            <person name="Vamathevan J."/>
            <person name="Riggs F."/>
            <person name="Grinberg V."/>
            <person name="Khouri H.M."/>
            <person name="Wackett L.P."/>
            <person name="Nelson K.E."/>
            <person name="Sadowsky M.J."/>
        </authorList>
    </citation>
    <scope>NUCLEOTIDE SEQUENCE [LARGE SCALE GENOMIC DNA]</scope>
    <source>
        <strain>TC1</strain>
    </source>
</reference>
<accession>A1R7V6</accession>
<organism>
    <name type="scientific">Paenarthrobacter aurescens (strain TC1)</name>
    <dbReference type="NCBI Taxonomy" id="290340"/>
    <lineage>
        <taxon>Bacteria</taxon>
        <taxon>Bacillati</taxon>
        <taxon>Actinomycetota</taxon>
        <taxon>Actinomycetes</taxon>
        <taxon>Micrococcales</taxon>
        <taxon>Micrococcaceae</taxon>
        <taxon>Paenarthrobacter</taxon>
    </lineage>
</organism>
<proteinExistence type="inferred from homology"/>
<comment type="function">
    <text evidence="1">F(1)F(0) ATP synthase produces ATP from ADP in the presence of a proton or sodium gradient. F-type ATPases consist of two structural domains, F(1) containing the extramembraneous catalytic core and F(0) containing the membrane proton channel, linked together by a central stalk and a peripheral stalk. During catalysis, ATP synthesis in the catalytic domain of F(1) is coupled via a rotary mechanism of the central stalk subunits to proton translocation.</text>
</comment>
<comment type="function">
    <text evidence="1">Component of the F(0) channel, it forms part of the peripheral stalk, linking F(1) to F(0).</text>
</comment>
<comment type="subunit">
    <text evidence="1">F-type ATPases have 2 components, F(1) - the catalytic core - and F(0) - the membrane proton channel. F(1) has five subunits: alpha(3), beta(3), gamma(1), delta(1), epsilon(1). F(0) has three main subunits: a(1), b(2) and c(10-14). The alpha and beta chains form an alternating ring which encloses part of the gamma chain. F(1) is attached to F(0) by a central stalk formed by the gamma and epsilon chains, while a peripheral stalk is formed by the delta and b chains.</text>
</comment>
<comment type="subcellular location">
    <subcellularLocation>
        <location evidence="1">Cell membrane</location>
        <topology evidence="1">Single-pass membrane protein</topology>
    </subcellularLocation>
</comment>
<comment type="similarity">
    <text evidence="1">Belongs to the ATPase B chain family.</text>
</comment>
<feature type="chain" id="PRO_0000368315" description="ATP synthase subunit b">
    <location>
        <begin position="1"/>
        <end position="185"/>
    </location>
</feature>
<feature type="transmembrane region" description="Helical" evidence="1">
    <location>
        <begin position="28"/>
        <end position="48"/>
    </location>
</feature>